<accession>Q18EB6</accession>
<feature type="chain" id="PRO_0000346614" description="Urease accessory protein UreD">
    <location>
        <begin position="1"/>
        <end position="304"/>
    </location>
</feature>
<keyword id="KW-0143">Chaperone</keyword>
<keyword id="KW-0963">Cytoplasm</keyword>
<keyword id="KW-0996">Nickel insertion</keyword>
<keyword id="KW-1185">Reference proteome</keyword>
<organism>
    <name type="scientific">Haloquadratum walsbyi (strain DSM 16790 / HBSQ001)</name>
    <dbReference type="NCBI Taxonomy" id="362976"/>
    <lineage>
        <taxon>Archaea</taxon>
        <taxon>Methanobacteriati</taxon>
        <taxon>Methanobacteriota</taxon>
        <taxon>Stenosarchaea group</taxon>
        <taxon>Halobacteria</taxon>
        <taxon>Halobacteriales</taxon>
        <taxon>Haloferacaceae</taxon>
        <taxon>Haloquadratum</taxon>
    </lineage>
</organism>
<gene>
    <name evidence="1" type="primary">ureD</name>
    <name type="ordered locus">HQ_3629A</name>
</gene>
<sequence>MSTDSDHTHPIPPAFQEYDTQKLRQSPAFGHGKHGIADLVVGREDNKPTRLLSDFLRVPYHLSGTLDSDPVDELITVCLQDPTGAITQGDRHSLTVTARPDAYAHITNQSASKVQTMKASYAHLEATLIAESGAYLEYLPEPTILNEDARCLQTTTVEMAPDATVIVGDVFVPDGLSAHEPFSFDHYHSRTDARVEQRLICADAVNLQPAQRDPRNLATIGEYTVIGNLYVFSPGADVEAIAEMVHQRLTDHEGAAGVSTLRNEAGITVRALGDRSTDVTAAIEAAWDETRRELLGVGAPLGDR</sequence>
<dbReference type="EMBL" id="AM180088">
    <property type="protein sequence ID" value="CAJ53717.1"/>
    <property type="molecule type" value="Genomic_DNA"/>
</dbReference>
<dbReference type="RefSeq" id="WP_011572799.1">
    <property type="nucleotide sequence ID" value="NC_008212.1"/>
</dbReference>
<dbReference type="SMR" id="Q18EB6"/>
<dbReference type="STRING" id="362976.HQ_3629A"/>
<dbReference type="GeneID" id="4194901"/>
<dbReference type="KEGG" id="hwa:HQ_3629A"/>
<dbReference type="eggNOG" id="arCOG04529">
    <property type="taxonomic scope" value="Archaea"/>
</dbReference>
<dbReference type="HOGENOM" id="CLU_056339_1_0_2"/>
<dbReference type="Proteomes" id="UP000001975">
    <property type="component" value="Chromosome"/>
</dbReference>
<dbReference type="GO" id="GO:0005737">
    <property type="term" value="C:cytoplasm"/>
    <property type="evidence" value="ECO:0007669"/>
    <property type="project" value="UniProtKB-SubCell"/>
</dbReference>
<dbReference type="GO" id="GO:0016151">
    <property type="term" value="F:nickel cation binding"/>
    <property type="evidence" value="ECO:0007669"/>
    <property type="project" value="UniProtKB-UniRule"/>
</dbReference>
<dbReference type="HAMAP" id="MF_01384">
    <property type="entry name" value="UreD"/>
    <property type="match status" value="1"/>
</dbReference>
<dbReference type="InterPro" id="IPR002669">
    <property type="entry name" value="UreD"/>
</dbReference>
<dbReference type="PANTHER" id="PTHR33643">
    <property type="entry name" value="UREASE ACCESSORY PROTEIN D"/>
    <property type="match status" value="1"/>
</dbReference>
<dbReference type="PANTHER" id="PTHR33643:SF1">
    <property type="entry name" value="UREASE ACCESSORY PROTEIN D"/>
    <property type="match status" value="1"/>
</dbReference>
<dbReference type="Pfam" id="PF01774">
    <property type="entry name" value="UreD"/>
    <property type="match status" value="1"/>
</dbReference>
<reference key="1">
    <citation type="journal article" date="2006" name="BMC Genomics">
        <title>The genome of the square archaeon Haloquadratum walsbyi: life at the limits of water activity.</title>
        <authorList>
            <person name="Bolhuis H."/>
            <person name="Palm P."/>
            <person name="Wende A."/>
            <person name="Falb M."/>
            <person name="Rampp M."/>
            <person name="Rodriguez-Valera F."/>
            <person name="Pfeiffer F."/>
            <person name="Oesterhelt D."/>
        </authorList>
    </citation>
    <scope>NUCLEOTIDE SEQUENCE [LARGE SCALE GENOMIC DNA]</scope>
    <source>
        <strain>DSM 16790 / HBSQ001</strain>
    </source>
</reference>
<protein>
    <recommendedName>
        <fullName evidence="1">Urease accessory protein UreD</fullName>
    </recommendedName>
</protein>
<evidence type="ECO:0000255" key="1">
    <source>
        <dbReference type="HAMAP-Rule" id="MF_01384"/>
    </source>
</evidence>
<name>URED_HALWD</name>
<comment type="function">
    <text evidence="1">Required for maturation of urease via the functional incorporation of the urease nickel metallocenter.</text>
</comment>
<comment type="subunit">
    <text evidence="1">UreD, UreF and UreG form a complex that acts as a GTP-hydrolysis-dependent molecular chaperone, activating the urease apoprotein by helping to assemble the nickel containing metallocenter of UreC. The UreE protein probably delivers the nickel.</text>
</comment>
<comment type="subcellular location">
    <subcellularLocation>
        <location evidence="1">Cytoplasm</location>
    </subcellularLocation>
</comment>
<comment type="similarity">
    <text evidence="1">Belongs to the UreD family.</text>
</comment>
<proteinExistence type="inferred from homology"/>